<dbReference type="EMBL" id="AJ250279">
    <property type="protein sequence ID" value="CAB62213.1"/>
    <property type="molecule type" value="mRNA"/>
</dbReference>
<dbReference type="SMR" id="Q9U5P1"/>
<dbReference type="Allergome" id="3350">
    <property type="allergen name" value="Lep d 13.0101"/>
</dbReference>
<dbReference type="Allergome" id="438">
    <property type="allergen name" value="Lep d 13"/>
</dbReference>
<dbReference type="GO" id="GO:0005737">
    <property type="term" value="C:cytoplasm"/>
    <property type="evidence" value="ECO:0007669"/>
    <property type="project" value="UniProtKB-SubCell"/>
</dbReference>
<dbReference type="GO" id="GO:0008289">
    <property type="term" value="F:lipid binding"/>
    <property type="evidence" value="ECO:0007669"/>
    <property type="project" value="UniProtKB-KW"/>
</dbReference>
<dbReference type="FunFam" id="2.40.128.20:FF:000001">
    <property type="entry name" value="Fatty acid-binding protein, adipocyte"/>
    <property type="match status" value="1"/>
</dbReference>
<dbReference type="Gene3D" id="2.40.128.20">
    <property type="match status" value="1"/>
</dbReference>
<dbReference type="InterPro" id="IPR012674">
    <property type="entry name" value="Calycin"/>
</dbReference>
<dbReference type="InterPro" id="IPR000463">
    <property type="entry name" value="Fatty_acid-bd"/>
</dbReference>
<dbReference type="InterPro" id="IPR031259">
    <property type="entry name" value="ILBP"/>
</dbReference>
<dbReference type="InterPro" id="IPR000566">
    <property type="entry name" value="Lipocln_cytosolic_FA-bd_dom"/>
</dbReference>
<dbReference type="PANTHER" id="PTHR11955">
    <property type="entry name" value="FATTY ACID BINDING PROTEIN"/>
    <property type="match status" value="1"/>
</dbReference>
<dbReference type="Pfam" id="PF00061">
    <property type="entry name" value="Lipocalin"/>
    <property type="match status" value="1"/>
</dbReference>
<dbReference type="PRINTS" id="PR00178">
    <property type="entry name" value="FATTYACIDBP"/>
</dbReference>
<dbReference type="SUPFAM" id="SSF50814">
    <property type="entry name" value="Lipocalins"/>
    <property type="match status" value="1"/>
</dbReference>
<dbReference type="PROSITE" id="PS00214">
    <property type="entry name" value="FABP"/>
    <property type="match status" value="1"/>
</dbReference>
<evidence type="ECO:0000250" key="1"/>
<evidence type="ECO:0000250" key="2">
    <source>
        <dbReference type="UniProtKB" id="P29498"/>
    </source>
</evidence>
<evidence type="ECO:0000305" key="3"/>
<proteinExistence type="evidence at protein level"/>
<protein>
    <recommendedName>
        <fullName>Fatty acid-binding protein</fullName>
    </recommendedName>
    <allergenName>Lep d 13</allergenName>
</protein>
<sequence length="131" mass="14723">MANIAGQYKLDKSENFDQFLDKLGVGFLVKTAAKTVKPTLEVAVDGDTYIFRSLSTFKNTEIKFKLGEEFEEDRADGKRVKTVIVKDGDNKFVQTQYGDKEVKVVREFKGDEVEVTASVDGVTSVRPYKRA</sequence>
<comment type="function">
    <text evidence="1">FABPs are thought to play a role in the intracellular transport of long-chain fatty acids and their acyl-CoA esters.</text>
</comment>
<comment type="subcellular location">
    <subcellularLocation>
        <location evidence="3">Cytoplasm</location>
    </subcellularLocation>
</comment>
<comment type="domain">
    <text evidence="1">Forms a beta-barrel structure that accommodates hydrophobic ligands in its interior.</text>
</comment>
<comment type="allergen">
    <text>Causes an allergic reaction in human. Common symptoms of mite allergy are bronchial asthma, allergic rhinitis and conjunctivitis.</text>
</comment>
<comment type="similarity">
    <text evidence="3">Belongs to the calycin superfamily. Fatty-acid binding protein (FABP) family.</text>
</comment>
<organism>
    <name type="scientific">Lepidoglyphus destructor</name>
    <name type="common">Storage mite</name>
    <name type="synonym">Glycyphagus destructor</name>
    <dbReference type="NCBI Taxonomy" id="36936"/>
    <lineage>
        <taxon>Eukaryota</taxon>
        <taxon>Metazoa</taxon>
        <taxon>Ecdysozoa</taxon>
        <taxon>Arthropoda</taxon>
        <taxon>Chelicerata</taxon>
        <taxon>Arachnida</taxon>
        <taxon>Acari</taxon>
        <taxon>Acariformes</taxon>
        <taxon>Sarcoptiformes</taxon>
        <taxon>Astigmata</taxon>
        <taxon>Glycyphagoidea</taxon>
        <taxon>Glycyphagidae</taxon>
        <taxon>Lepidoglyphus</taxon>
    </lineage>
</organism>
<accession>Q9U5P1</accession>
<feature type="chain" id="PRO_0000067421" description="Fatty acid-binding protein">
    <location>
        <begin position="1"/>
        <end position="131"/>
    </location>
</feature>
<feature type="binding site" evidence="2">
    <location>
        <position position="106"/>
    </location>
    <ligand>
        <name>(5Z,8Z,11Z,14Z)-eicosatetraenoate</name>
        <dbReference type="ChEBI" id="CHEBI:32395"/>
    </ligand>
</feature>
<feature type="binding site" evidence="2">
    <location>
        <position position="106"/>
    </location>
    <ligand>
        <name>(9Z)-octadecenoate</name>
        <dbReference type="ChEBI" id="CHEBI:30823"/>
    </ligand>
</feature>
<feature type="binding site" evidence="2">
    <location>
        <begin position="126"/>
        <end position="128"/>
    </location>
    <ligand>
        <name>(5Z,8Z,11Z,14Z)-eicosatetraenoate</name>
        <dbReference type="ChEBI" id="CHEBI:32395"/>
    </ligand>
</feature>
<feature type="binding site" evidence="2">
    <location>
        <begin position="126"/>
        <end position="128"/>
    </location>
    <ligand>
        <name>(9Z)-octadecenoate</name>
        <dbReference type="ChEBI" id="CHEBI:30823"/>
    </ligand>
</feature>
<reference key="1">
    <citation type="journal article" date="2001" name="Eur. J. Biochem.">
        <title>Cloning of three new allergens from the dust mite Lepidoglyphus destructor using phage surface display technology.</title>
        <authorList>
            <person name="Eriksson T.L.J."/>
            <person name="Rasool O."/>
            <person name="Huecas S."/>
            <person name="Whitley P."/>
            <person name="Crameri R."/>
            <person name="Appenzeller U."/>
            <person name="Gafvelin G."/>
            <person name="van Hage-Hamsten M."/>
        </authorList>
    </citation>
    <scope>NUCLEOTIDE SEQUENCE [MRNA]</scope>
</reference>
<name>FABP_LEPDS</name>
<keyword id="KW-0020">Allergen</keyword>
<keyword id="KW-0963">Cytoplasm</keyword>
<keyword id="KW-0446">Lipid-binding</keyword>
<keyword id="KW-0813">Transport</keyword>